<comment type="function">
    <text evidence="1">Zinc phosphodiesterase, which has both exoribonuclease and endoribonuclease activities.</text>
</comment>
<comment type="cofactor">
    <cofactor evidence="1">
        <name>Zn(2+)</name>
        <dbReference type="ChEBI" id="CHEBI:29105"/>
    </cofactor>
    <text evidence="1">Binds 2 Zn(2+) ions.</text>
</comment>
<comment type="subunit">
    <text evidence="1">Homodimer.</text>
</comment>
<comment type="similarity">
    <text evidence="1">Belongs to the RNase Z family. RNase BN subfamily.</text>
</comment>
<feature type="chain" id="PRO_1000070277" description="Ribonuclease BN">
    <location>
        <begin position="1"/>
        <end position="305"/>
    </location>
</feature>
<feature type="active site" description="Proton acceptor" evidence="1">
    <location>
        <position position="68"/>
    </location>
</feature>
<feature type="binding site" evidence="1">
    <location>
        <position position="64"/>
    </location>
    <ligand>
        <name>Zn(2+)</name>
        <dbReference type="ChEBI" id="CHEBI:29105"/>
        <label>1</label>
        <note>catalytic</note>
    </ligand>
</feature>
<feature type="binding site" evidence="1">
    <location>
        <position position="66"/>
    </location>
    <ligand>
        <name>Zn(2+)</name>
        <dbReference type="ChEBI" id="CHEBI:29105"/>
        <label>1</label>
        <note>catalytic</note>
    </ligand>
</feature>
<feature type="binding site" evidence="1">
    <location>
        <position position="68"/>
    </location>
    <ligand>
        <name>Zn(2+)</name>
        <dbReference type="ChEBI" id="CHEBI:29105"/>
        <label>2</label>
        <note>catalytic</note>
    </ligand>
</feature>
<feature type="binding site" evidence="1">
    <location>
        <position position="69"/>
    </location>
    <ligand>
        <name>Zn(2+)</name>
        <dbReference type="ChEBI" id="CHEBI:29105"/>
        <label>2</label>
        <note>catalytic</note>
    </ligand>
</feature>
<feature type="binding site" evidence="1">
    <location>
        <position position="141"/>
    </location>
    <ligand>
        <name>Zn(2+)</name>
        <dbReference type="ChEBI" id="CHEBI:29105"/>
        <label>1</label>
        <note>catalytic</note>
    </ligand>
</feature>
<feature type="binding site" evidence="1">
    <location>
        <position position="212"/>
    </location>
    <ligand>
        <name>Zn(2+)</name>
        <dbReference type="ChEBI" id="CHEBI:29105"/>
        <label>1</label>
        <note>catalytic</note>
    </ligand>
</feature>
<feature type="binding site" evidence="1">
    <location>
        <position position="212"/>
    </location>
    <ligand>
        <name>Zn(2+)</name>
        <dbReference type="ChEBI" id="CHEBI:29105"/>
        <label>2</label>
        <note>catalytic</note>
    </ligand>
</feature>
<feature type="binding site" evidence="1">
    <location>
        <position position="270"/>
    </location>
    <ligand>
        <name>Zn(2+)</name>
        <dbReference type="ChEBI" id="CHEBI:29105"/>
        <label>2</label>
        <note>catalytic</note>
    </ligand>
</feature>
<evidence type="ECO:0000255" key="1">
    <source>
        <dbReference type="HAMAP-Rule" id="MF_01818"/>
    </source>
</evidence>
<keyword id="KW-0255">Endonuclease</keyword>
<keyword id="KW-0269">Exonuclease</keyword>
<keyword id="KW-0378">Hydrolase</keyword>
<keyword id="KW-0479">Metal-binding</keyword>
<keyword id="KW-0540">Nuclease</keyword>
<keyword id="KW-1185">Reference proteome</keyword>
<keyword id="KW-0819">tRNA processing</keyword>
<keyword id="KW-0862">Zinc</keyword>
<reference key="1">
    <citation type="journal article" date="2007" name="J. Bacteriol.">
        <title>The genome sequence of avian pathogenic Escherichia coli strain O1:K1:H7 shares strong similarities with human extraintestinal pathogenic E. coli genomes.</title>
        <authorList>
            <person name="Johnson T.J."/>
            <person name="Kariyawasam S."/>
            <person name="Wannemuehler Y."/>
            <person name="Mangiamele P."/>
            <person name="Johnson S.J."/>
            <person name="Doetkott C."/>
            <person name="Skyberg J.A."/>
            <person name="Lynne A.M."/>
            <person name="Johnson J.R."/>
            <person name="Nolan L.K."/>
        </authorList>
    </citation>
    <scope>NUCLEOTIDE SEQUENCE [LARGE SCALE GENOMIC DNA]</scope>
</reference>
<sequence length="305" mass="32964">MELIFLGTSAGVPTRTRNVTAILLNLQHPTQSGLWLFDCGEGTQHQLLHTAFNPGKLDKIFISHLHGDHLFGLPGLLCSRSMSGIIQPLTIYGPHGIREFVETALRISGSWTDYPLEIVEIGAGEIFDDGLRKVTAYPMEHPLECYGYRIEEHDKPGALNAQALKAAGVPPGPLFQELKAGKTIMLDDGRQINGADYLAVPVPGKALAIFGDTGPCDAALELAKGVDVMVHEATLDMAMEAKANSRGHSSTRQAAALAREAGVGKLIITHVSSRYDDKGCQHLLRECRSIFPATELANDFAVFSI</sequence>
<name>RBN_ECOK1</name>
<organism>
    <name type="scientific">Escherichia coli O1:K1 / APEC</name>
    <dbReference type="NCBI Taxonomy" id="405955"/>
    <lineage>
        <taxon>Bacteria</taxon>
        <taxon>Pseudomonadati</taxon>
        <taxon>Pseudomonadota</taxon>
        <taxon>Gammaproteobacteria</taxon>
        <taxon>Enterobacterales</taxon>
        <taxon>Enterobacteriaceae</taxon>
        <taxon>Escherichia</taxon>
    </lineage>
</organism>
<proteinExistence type="inferred from homology"/>
<protein>
    <recommendedName>
        <fullName evidence="1">Ribonuclease BN</fullName>
        <shortName evidence="1">RNase BN</shortName>
        <ecNumber evidence="1">3.1.-.-</ecNumber>
    </recommendedName>
    <alternativeName>
        <fullName evidence="1">Ribonuclease Z homolog</fullName>
        <shortName evidence="1">RNase Z homolog</shortName>
    </alternativeName>
</protein>
<accession>A1ADC0</accession>
<gene>
    <name evidence="1" type="primary">rbn</name>
    <name type="synonym">rnz</name>
    <name type="ordered locus">Ecok1_21660</name>
    <name type="ORF">APECO1_4293</name>
</gene>
<dbReference type="EC" id="3.1.-.-" evidence="1"/>
<dbReference type="EMBL" id="CP000468">
    <property type="protein sequence ID" value="ABJ01660.1"/>
    <property type="molecule type" value="Genomic_DNA"/>
</dbReference>
<dbReference type="RefSeq" id="WP_000420115.1">
    <property type="nucleotide sequence ID" value="NZ_CADILS010000004.1"/>
</dbReference>
<dbReference type="SMR" id="A1ADC0"/>
<dbReference type="KEGG" id="ecv:APECO1_4293"/>
<dbReference type="HOGENOM" id="CLU_031317_2_0_6"/>
<dbReference type="Proteomes" id="UP000008216">
    <property type="component" value="Chromosome"/>
</dbReference>
<dbReference type="GO" id="GO:0042781">
    <property type="term" value="F:3'-tRNA processing endoribonuclease activity"/>
    <property type="evidence" value="ECO:0007669"/>
    <property type="project" value="TreeGrafter"/>
</dbReference>
<dbReference type="GO" id="GO:0004527">
    <property type="term" value="F:exonuclease activity"/>
    <property type="evidence" value="ECO:0007669"/>
    <property type="project" value="UniProtKB-UniRule"/>
</dbReference>
<dbReference type="GO" id="GO:0008270">
    <property type="term" value="F:zinc ion binding"/>
    <property type="evidence" value="ECO:0007669"/>
    <property type="project" value="UniProtKB-UniRule"/>
</dbReference>
<dbReference type="CDD" id="cd07717">
    <property type="entry name" value="RNaseZ_ZiPD-like_MBL-fold"/>
    <property type="match status" value="1"/>
</dbReference>
<dbReference type="FunFam" id="3.60.15.10:FF:000002">
    <property type="entry name" value="Ribonuclease Z"/>
    <property type="match status" value="1"/>
</dbReference>
<dbReference type="Gene3D" id="3.60.15.10">
    <property type="entry name" value="Ribonuclease Z/Hydroxyacylglutathione hydrolase-like"/>
    <property type="match status" value="1"/>
</dbReference>
<dbReference type="HAMAP" id="MF_01818">
    <property type="entry name" value="RNase_Z_BN"/>
    <property type="match status" value="1"/>
</dbReference>
<dbReference type="InterPro" id="IPR001279">
    <property type="entry name" value="Metallo-B-lactamas"/>
</dbReference>
<dbReference type="InterPro" id="IPR036866">
    <property type="entry name" value="RibonucZ/Hydroxyglut_hydro"/>
</dbReference>
<dbReference type="InterPro" id="IPR013469">
    <property type="entry name" value="Rnase_BN"/>
</dbReference>
<dbReference type="InterPro" id="IPR013471">
    <property type="entry name" value="RNase_Z/BN"/>
</dbReference>
<dbReference type="NCBIfam" id="NF000800">
    <property type="entry name" value="PRK00055.1-1"/>
    <property type="match status" value="1"/>
</dbReference>
<dbReference type="NCBIfam" id="NF000801">
    <property type="entry name" value="PRK00055.1-3"/>
    <property type="match status" value="1"/>
</dbReference>
<dbReference type="NCBIfam" id="TIGR02651">
    <property type="entry name" value="RNase_Z"/>
    <property type="match status" value="1"/>
</dbReference>
<dbReference type="NCBIfam" id="TIGR02649">
    <property type="entry name" value="true_RNase_BN"/>
    <property type="match status" value="1"/>
</dbReference>
<dbReference type="PANTHER" id="PTHR46018">
    <property type="entry name" value="ZINC PHOSPHODIESTERASE ELAC PROTEIN 1"/>
    <property type="match status" value="1"/>
</dbReference>
<dbReference type="PANTHER" id="PTHR46018:SF2">
    <property type="entry name" value="ZINC PHOSPHODIESTERASE ELAC PROTEIN 1"/>
    <property type="match status" value="1"/>
</dbReference>
<dbReference type="Pfam" id="PF12706">
    <property type="entry name" value="Lactamase_B_2"/>
    <property type="match status" value="2"/>
</dbReference>
<dbReference type="SMART" id="SM00849">
    <property type="entry name" value="Lactamase_B"/>
    <property type="match status" value="1"/>
</dbReference>
<dbReference type="SUPFAM" id="SSF56281">
    <property type="entry name" value="Metallo-hydrolase/oxidoreductase"/>
    <property type="match status" value="1"/>
</dbReference>